<evidence type="ECO:0000255" key="1">
    <source>
        <dbReference type="PROSITE-ProRule" id="PRU00441"/>
    </source>
</evidence>
<evidence type="ECO:0000305" key="2"/>
<keyword id="KW-1003">Cell membrane</keyword>
<keyword id="KW-0472">Membrane</keyword>
<keyword id="KW-0812">Transmembrane</keyword>
<keyword id="KW-1133">Transmembrane helix</keyword>
<keyword id="KW-0813">Transport</keyword>
<feature type="chain" id="PRO_0000060309" description="Probable ABC transporter permease protein PH1038">
    <location>
        <begin position="1"/>
        <end position="291"/>
    </location>
</feature>
<feature type="transmembrane region" description="Helical" evidence="1">
    <location>
        <begin position="7"/>
        <end position="27"/>
    </location>
</feature>
<feature type="transmembrane region" description="Helical" evidence="1">
    <location>
        <begin position="75"/>
        <end position="95"/>
    </location>
</feature>
<feature type="transmembrane region" description="Helical" evidence="1">
    <location>
        <begin position="106"/>
        <end position="126"/>
    </location>
</feature>
<feature type="transmembrane region" description="Helical" evidence="1">
    <location>
        <begin position="133"/>
        <end position="153"/>
    </location>
</feature>
<feature type="transmembrane region" description="Helical" evidence="1">
    <location>
        <begin position="160"/>
        <end position="180"/>
    </location>
</feature>
<feature type="transmembrane region" description="Helical" evidence="1">
    <location>
        <begin position="208"/>
        <end position="228"/>
    </location>
</feature>
<feature type="transmembrane region" description="Helical" evidence="1">
    <location>
        <begin position="232"/>
        <end position="252"/>
    </location>
</feature>
<feature type="transmembrane region" description="Helical" evidence="1">
    <location>
        <begin position="267"/>
        <end position="287"/>
    </location>
</feature>
<feature type="domain" description="ABC transmembrane type-1" evidence="1">
    <location>
        <begin position="71"/>
        <end position="286"/>
    </location>
</feature>
<organism>
    <name type="scientific">Pyrococcus horikoshii (strain ATCC 700860 / DSM 12428 / JCM 9974 / NBRC 100139 / OT-3)</name>
    <dbReference type="NCBI Taxonomy" id="70601"/>
    <lineage>
        <taxon>Archaea</taxon>
        <taxon>Methanobacteriati</taxon>
        <taxon>Methanobacteriota</taxon>
        <taxon>Thermococci</taxon>
        <taxon>Thermococcales</taxon>
        <taxon>Thermococcaceae</taxon>
        <taxon>Pyrococcus</taxon>
    </lineage>
</organism>
<accession>O58759</accession>
<protein>
    <recommendedName>
        <fullName>Probable ABC transporter permease protein PH1038</fullName>
    </recommendedName>
</protein>
<sequence>MRRNLTPFFFLLPALTLMVPFVIYPVFKTIYLSFFLGDKFVGLENYKNVLLSPDIVNLERFPTKSPPWGALIHNIVWIAIHLPTTIFLGLGFALLLRKKEVKGSSIIKSIIFLGMVIPMVVGGLIIRFLFEEGAGVIPAFFKLIGIEKLAITWTAYPQTALFSVILGSIWIWTGFSMLMYSAGLASIPKDYYEAALIDGANKFQIFRFVIWPLLRPITVVIVAMTLLWDLKIFDIVYVATGGGPGGASMVLALQMWDYFARSLNYNYAAVVAVLLTALTFIPALWLIKRRG</sequence>
<comment type="function">
    <text>Probably part of a binding-protein-dependent transport system PH1036/38/39. Probably responsible for the translocation of the substrate across the membrane.</text>
</comment>
<comment type="subcellular location">
    <subcellularLocation>
        <location evidence="2">Cell membrane</location>
        <topology evidence="1">Multi-pass membrane protein</topology>
    </subcellularLocation>
</comment>
<comment type="similarity">
    <text evidence="2">Belongs to the binding-protein-dependent transport system permease family. MalFG subfamily.</text>
</comment>
<gene>
    <name type="ordered locus">PH1038</name>
    <name type="ORF">PHAJ015</name>
</gene>
<proteinExistence type="inferred from homology"/>
<name>Y1038_PYRHO</name>
<reference key="1">
    <citation type="journal article" date="1998" name="DNA Res.">
        <title>Complete sequence and gene organization of the genome of a hyper-thermophilic archaebacterium, Pyrococcus horikoshii OT3.</title>
        <authorList>
            <person name="Kawarabayasi Y."/>
            <person name="Sawada M."/>
            <person name="Horikawa H."/>
            <person name="Haikawa Y."/>
            <person name="Hino Y."/>
            <person name="Yamamoto S."/>
            <person name="Sekine M."/>
            <person name="Baba S."/>
            <person name="Kosugi H."/>
            <person name="Hosoyama A."/>
            <person name="Nagai Y."/>
            <person name="Sakai M."/>
            <person name="Ogura K."/>
            <person name="Otsuka R."/>
            <person name="Nakazawa H."/>
            <person name="Takamiya M."/>
            <person name="Ohfuku Y."/>
            <person name="Funahashi T."/>
            <person name="Tanaka T."/>
            <person name="Kudoh Y."/>
            <person name="Yamazaki J."/>
            <person name="Kushida N."/>
            <person name="Oguchi A."/>
            <person name="Aoki K."/>
            <person name="Yoshizawa T."/>
            <person name="Nakamura Y."/>
            <person name="Robb F.T."/>
            <person name="Horikoshi K."/>
            <person name="Masuchi Y."/>
            <person name="Shizuya H."/>
            <person name="Kikuchi H."/>
        </authorList>
    </citation>
    <scope>NUCLEOTIDE SEQUENCE [LARGE SCALE GENOMIC DNA]</scope>
    <source>
        <strain>ATCC 700860 / DSM 12428 / JCM 9974 / NBRC 100139 / OT-3</strain>
    </source>
</reference>
<dbReference type="EMBL" id="BA000001">
    <property type="protein sequence ID" value="BAA30136.1"/>
    <property type="molecule type" value="Genomic_DNA"/>
</dbReference>
<dbReference type="PIR" id="B71097">
    <property type="entry name" value="B71097"/>
</dbReference>
<dbReference type="RefSeq" id="WP_010885125.1">
    <property type="nucleotide sequence ID" value="NC_000961.1"/>
</dbReference>
<dbReference type="SMR" id="O58759"/>
<dbReference type="STRING" id="70601.gene:9377996"/>
<dbReference type="EnsemblBacteria" id="BAA30136">
    <property type="protein sequence ID" value="BAA30136"/>
    <property type="gene ID" value="BAA30136"/>
</dbReference>
<dbReference type="GeneID" id="1443360"/>
<dbReference type="KEGG" id="pho:PH1038"/>
<dbReference type="eggNOG" id="arCOG00157">
    <property type="taxonomic scope" value="Archaea"/>
</dbReference>
<dbReference type="OrthoDB" id="45815at2157"/>
<dbReference type="Proteomes" id="UP000000752">
    <property type="component" value="Chromosome"/>
</dbReference>
<dbReference type="GO" id="GO:0005886">
    <property type="term" value="C:plasma membrane"/>
    <property type="evidence" value="ECO:0007669"/>
    <property type="project" value="UniProtKB-SubCell"/>
</dbReference>
<dbReference type="GO" id="GO:0055085">
    <property type="term" value="P:transmembrane transport"/>
    <property type="evidence" value="ECO:0007669"/>
    <property type="project" value="InterPro"/>
</dbReference>
<dbReference type="CDD" id="cd06261">
    <property type="entry name" value="TM_PBP2"/>
    <property type="match status" value="1"/>
</dbReference>
<dbReference type="Gene3D" id="1.10.3720.10">
    <property type="entry name" value="MetI-like"/>
    <property type="match status" value="1"/>
</dbReference>
<dbReference type="InterPro" id="IPR000515">
    <property type="entry name" value="MetI-like"/>
</dbReference>
<dbReference type="InterPro" id="IPR035906">
    <property type="entry name" value="MetI-like_sf"/>
</dbReference>
<dbReference type="PANTHER" id="PTHR43005">
    <property type="entry name" value="BLR7065 PROTEIN"/>
    <property type="match status" value="1"/>
</dbReference>
<dbReference type="PANTHER" id="PTHR43005:SF1">
    <property type="entry name" value="SPERMIDINE_PUTRESCINE TRANSPORT SYSTEM PERMEASE PROTEIN"/>
    <property type="match status" value="1"/>
</dbReference>
<dbReference type="Pfam" id="PF00528">
    <property type="entry name" value="BPD_transp_1"/>
    <property type="match status" value="1"/>
</dbReference>
<dbReference type="SUPFAM" id="SSF160964">
    <property type="entry name" value="MalF N-terminal region-like"/>
    <property type="match status" value="1"/>
</dbReference>
<dbReference type="SUPFAM" id="SSF161098">
    <property type="entry name" value="MetI-like"/>
    <property type="match status" value="1"/>
</dbReference>
<dbReference type="PROSITE" id="PS50928">
    <property type="entry name" value="ABC_TM1"/>
    <property type="match status" value="1"/>
</dbReference>